<comment type="function">
    <text>IF-3 binds to the 30S ribosomal subunit and shifts the equilibrium between 70S ribosomes and their 50S and 30S subunits in favor of the free subunits, thus enhancing the availability of 30S subunits on which protein synthesis initiation begins.</text>
</comment>
<comment type="subunit">
    <text>Monomer. Binds to proteins S7, S11 and S18 of the small ribosomal subunit.</text>
</comment>
<comment type="subcellular location">
    <subcellularLocation>
        <location>Cytoplasm</location>
    </subcellularLocation>
</comment>
<comment type="similarity">
    <text evidence="1">Belongs to the IF-3 family.</text>
</comment>
<comment type="sequence caution" evidence="2">
    <conflict type="erroneous initiation">
        <sequence resource="EMBL-CDS" id="BAD70374"/>
    </conflict>
</comment>
<dbReference type="EMBL" id="AP008226">
    <property type="protein sequence ID" value="BAD70374.1"/>
    <property type="status" value="ALT_INIT"/>
    <property type="molecule type" value="Genomic_DNA"/>
</dbReference>
<dbReference type="RefSeq" id="YP_143817.1">
    <property type="nucleotide sequence ID" value="NC_006461.1"/>
</dbReference>
<dbReference type="PDB" id="1I96">
    <property type="method" value="X-ray"/>
    <property type="resolution" value="4.20 A"/>
    <property type="chains" value="V=83-171"/>
</dbReference>
<dbReference type="PDB" id="5LMN">
    <property type="method" value="EM"/>
    <property type="resolution" value="3.55 A"/>
    <property type="chains" value="X=1-171"/>
</dbReference>
<dbReference type="PDB" id="5LMO">
    <property type="method" value="EM"/>
    <property type="resolution" value="4.30 A"/>
    <property type="chains" value="X=1-171"/>
</dbReference>
<dbReference type="PDB" id="5LMP">
    <property type="method" value="EM"/>
    <property type="resolution" value="5.35 A"/>
    <property type="chains" value="X=1-171"/>
</dbReference>
<dbReference type="PDB" id="5LMQ">
    <property type="method" value="EM"/>
    <property type="resolution" value="4.20 A"/>
    <property type="chains" value="X=1-171"/>
</dbReference>
<dbReference type="PDB" id="5LMR">
    <property type="method" value="EM"/>
    <property type="resolution" value="4.45 A"/>
    <property type="chains" value="X=1-171"/>
</dbReference>
<dbReference type="PDB" id="5LMS">
    <property type="method" value="EM"/>
    <property type="resolution" value="5.10 A"/>
    <property type="chains" value="X=1-171"/>
</dbReference>
<dbReference type="PDB" id="5LMT">
    <property type="method" value="EM"/>
    <property type="resolution" value="4.15 A"/>
    <property type="chains" value="X=1-171"/>
</dbReference>
<dbReference type="PDB" id="5LMU">
    <property type="method" value="EM"/>
    <property type="resolution" value="4.00 A"/>
    <property type="chains" value="X=1-171"/>
</dbReference>
<dbReference type="PDB" id="5LMV">
    <property type="method" value="EM"/>
    <property type="resolution" value="4.90 A"/>
    <property type="chains" value="X=1-171"/>
</dbReference>
<dbReference type="PDBsum" id="1I96"/>
<dbReference type="PDBsum" id="5LMN"/>
<dbReference type="PDBsum" id="5LMO"/>
<dbReference type="PDBsum" id="5LMP"/>
<dbReference type="PDBsum" id="5LMQ"/>
<dbReference type="PDBsum" id="5LMR"/>
<dbReference type="PDBsum" id="5LMS"/>
<dbReference type="PDBsum" id="5LMT"/>
<dbReference type="PDBsum" id="5LMU"/>
<dbReference type="PDBsum" id="5LMV"/>
<dbReference type="EMDB" id="EMD-4073"/>
<dbReference type="EMDB" id="EMD-4074"/>
<dbReference type="EMDB" id="EMD-4075"/>
<dbReference type="EMDB" id="EMD-4076"/>
<dbReference type="EMDB" id="EMD-4077"/>
<dbReference type="EMDB" id="EMD-4078"/>
<dbReference type="EMDB" id="EMD-4079"/>
<dbReference type="EMDB" id="EMD-4080"/>
<dbReference type="EMDB" id="EMD-4083"/>
<dbReference type="SMR" id="Q5SKU2"/>
<dbReference type="EnsemblBacteria" id="BAD70374">
    <property type="protein sequence ID" value="BAD70374"/>
    <property type="gene ID" value="BAD70374"/>
</dbReference>
<dbReference type="KEGG" id="ttj:TTHA0551"/>
<dbReference type="PATRIC" id="fig|300852.9.peg.550"/>
<dbReference type="eggNOG" id="COG0290">
    <property type="taxonomic scope" value="Bacteria"/>
</dbReference>
<dbReference type="HOGENOM" id="CLU_054919_3_2_0"/>
<dbReference type="EvolutionaryTrace" id="Q5SKU2"/>
<dbReference type="Proteomes" id="UP000000532">
    <property type="component" value="Chromosome"/>
</dbReference>
<dbReference type="GO" id="GO:0005829">
    <property type="term" value="C:cytosol"/>
    <property type="evidence" value="ECO:0007669"/>
    <property type="project" value="TreeGrafter"/>
</dbReference>
<dbReference type="GO" id="GO:0016020">
    <property type="term" value="C:membrane"/>
    <property type="evidence" value="ECO:0007669"/>
    <property type="project" value="TreeGrafter"/>
</dbReference>
<dbReference type="GO" id="GO:0043022">
    <property type="term" value="F:ribosome binding"/>
    <property type="evidence" value="ECO:0007669"/>
    <property type="project" value="TreeGrafter"/>
</dbReference>
<dbReference type="GO" id="GO:0003743">
    <property type="term" value="F:translation initiation factor activity"/>
    <property type="evidence" value="ECO:0007669"/>
    <property type="project" value="UniProtKB-UniRule"/>
</dbReference>
<dbReference type="GO" id="GO:0032790">
    <property type="term" value="P:ribosome disassembly"/>
    <property type="evidence" value="ECO:0007669"/>
    <property type="project" value="TreeGrafter"/>
</dbReference>
<dbReference type="FunFam" id="3.10.20.80:FF:000001">
    <property type="entry name" value="Translation initiation factor IF-3"/>
    <property type="match status" value="1"/>
</dbReference>
<dbReference type="FunFam" id="3.30.110.10:FF:000001">
    <property type="entry name" value="Translation initiation factor IF-3"/>
    <property type="match status" value="1"/>
</dbReference>
<dbReference type="Gene3D" id="3.30.110.10">
    <property type="entry name" value="Translation initiation factor 3 (IF-3), C-terminal domain"/>
    <property type="match status" value="1"/>
</dbReference>
<dbReference type="Gene3D" id="3.10.20.80">
    <property type="entry name" value="Translation initiation factor 3 (IF-3), N-terminal domain"/>
    <property type="match status" value="1"/>
</dbReference>
<dbReference type="HAMAP" id="MF_00080">
    <property type="entry name" value="IF_3"/>
    <property type="match status" value="1"/>
</dbReference>
<dbReference type="InterPro" id="IPR036788">
    <property type="entry name" value="T_IF-3_C_sf"/>
</dbReference>
<dbReference type="InterPro" id="IPR036787">
    <property type="entry name" value="T_IF-3_N_sf"/>
</dbReference>
<dbReference type="InterPro" id="IPR001288">
    <property type="entry name" value="Translation_initiation_fac_3"/>
</dbReference>
<dbReference type="InterPro" id="IPR019815">
    <property type="entry name" value="Translation_initiation_fac_3_C"/>
</dbReference>
<dbReference type="InterPro" id="IPR019814">
    <property type="entry name" value="Translation_initiation_fac_3_N"/>
</dbReference>
<dbReference type="NCBIfam" id="TIGR00168">
    <property type="entry name" value="infC"/>
    <property type="match status" value="1"/>
</dbReference>
<dbReference type="PANTHER" id="PTHR10938">
    <property type="entry name" value="TRANSLATION INITIATION FACTOR IF-3"/>
    <property type="match status" value="1"/>
</dbReference>
<dbReference type="PANTHER" id="PTHR10938:SF0">
    <property type="entry name" value="TRANSLATION INITIATION FACTOR IF-3, MITOCHONDRIAL"/>
    <property type="match status" value="1"/>
</dbReference>
<dbReference type="Pfam" id="PF00707">
    <property type="entry name" value="IF3_C"/>
    <property type="match status" value="1"/>
</dbReference>
<dbReference type="Pfam" id="PF05198">
    <property type="entry name" value="IF3_N"/>
    <property type="match status" value="1"/>
</dbReference>
<dbReference type="SUPFAM" id="SSF55200">
    <property type="entry name" value="Translation initiation factor IF3, C-terminal domain"/>
    <property type="match status" value="1"/>
</dbReference>
<dbReference type="SUPFAM" id="SSF54364">
    <property type="entry name" value="Translation initiation factor IF3, N-terminal domain"/>
    <property type="match status" value="1"/>
</dbReference>
<reference key="1">
    <citation type="submission" date="2004-11" db="EMBL/GenBank/DDBJ databases">
        <title>Complete genome sequence of Thermus thermophilus HB8.</title>
        <authorList>
            <person name="Masui R."/>
            <person name="Kurokawa K."/>
            <person name="Nakagawa N."/>
            <person name="Tokunaga F."/>
            <person name="Koyama Y."/>
            <person name="Shibata T."/>
            <person name="Oshima T."/>
            <person name="Yokoyama S."/>
            <person name="Yasunaga T."/>
            <person name="Kuramitsu S."/>
        </authorList>
    </citation>
    <scope>NUCLEOTIDE SEQUENCE [LARGE SCALE GENOMIC DNA]</scope>
    <source>
        <strain>ATCC 27634 / DSM 579 / HB8</strain>
    </source>
</reference>
<reference key="2">
    <citation type="journal article" date="2001" name="EMBO J.">
        <title>Crystal structures of complexes of the small ribosomal subunit with tetracycline, edeine and IF3.</title>
        <authorList>
            <person name="Pioletti M."/>
            <person name="Schluenzen F."/>
            <person name="Harms J."/>
            <person name="Zarivach R."/>
            <person name="Gluehmann M."/>
            <person name="Avila H."/>
            <person name="Bashan A."/>
            <person name="Bartels H."/>
            <person name="Auerbach T."/>
            <person name="Jacobi C."/>
            <person name="Hartsch T."/>
            <person name="Yonath A."/>
            <person name="Franceschi F."/>
        </authorList>
    </citation>
    <scope>X-RAY CRYSTALLOGRAPHY (3.2 ANGSTROMS) OF 83-171 WITH THE 30S RIBOSOMAL SUBUNIT</scope>
</reference>
<evidence type="ECO:0000255" key="1">
    <source>
        <dbReference type="HAMAP-Rule" id="MF_00080"/>
    </source>
</evidence>
<evidence type="ECO:0000305" key="2"/>
<proteinExistence type="evidence at protein level"/>
<sequence length="171" mass="19866">MKEYLTNERIRAKQVRVVGPDGKQLGIMDTREALRLAQEMDLDLVLVGPNADPPVARIMDYSKWRYEQQMAEKEARKKAKRTEVKSIKFRVKIDEHDYQTKLGHIKRFLQEGHKVKVTIMFRGREVAHPELGERILNRVTEDLKDLAVVEMKPEMLGRDMNMLLAPVKVSA</sequence>
<organism>
    <name type="scientific">Thermus thermophilus (strain ATCC 27634 / DSM 579 / HB8)</name>
    <dbReference type="NCBI Taxonomy" id="300852"/>
    <lineage>
        <taxon>Bacteria</taxon>
        <taxon>Thermotogati</taxon>
        <taxon>Deinococcota</taxon>
        <taxon>Deinococci</taxon>
        <taxon>Thermales</taxon>
        <taxon>Thermaceae</taxon>
        <taxon>Thermus</taxon>
    </lineage>
</organism>
<feature type="chain" id="PRO_0000280033" description="Translation initiation factor IF-3">
    <location>
        <begin position="1"/>
        <end position="171"/>
    </location>
</feature>
<gene>
    <name evidence="1" type="primary">infC</name>
    <name type="ordered locus">TTHA0551</name>
</gene>
<accession>Q5SKU2</accession>
<keyword id="KW-0002">3D-structure</keyword>
<keyword id="KW-0963">Cytoplasm</keyword>
<keyword id="KW-0396">Initiation factor</keyword>
<keyword id="KW-0648">Protein biosynthesis</keyword>
<keyword id="KW-1185">Reference proteome</keyword>
<protein>
    <recommendedName>
        <fullName evidence="1">Translation initiation factor IF-3</fullName>
    </recommendedName>
</protein>
<name>IF3_THET8</name>